<name>NUOC_AZOC5</name>
<reference key="1">
    <citation type="submission" date="2007-04" db="EMBL/GenBank/DDBJ databases">
        <title>Complete genome sequence of the nitrogen-fixing bacterium Azorhizobium caulinodans ORS571.</title>
        <authorList>
            <person name="Lee K.B."/>
            <person name="Backer P.D."/>
            <person name="Aono T."/>
            <person name="Liu C.T."/>
            <person name="Suzuki S."/>
            <person name="Suzuki T."/>
            <person name="Kaneko T."/>
            <person name="Yamada M."/>
            <person name="Tabata S."/>
            <person name="Kupfer D.M."/>
            <person name="Najar F.Z."/>
            <person name="Wiley G.B."/>
            <person name="Roe B."/>
            <person name="Binnewies T."/>
            <person name="Ussery D."/>
            <person name="Vereecke D."/>
            <person name="Gevers D."/>
            <person name="Holsters M."/>
            <person name="Oyaizu H."/>
        </authorList>
    </citation>
    <scope>NUCLEOTIDE SEQUENCE [LARGE SCALE GENOMIC DNA]</scope>
    <source>
        <strain>ATCC 43989 / DSM 5975 / JCM 20966 / LMG 6465 / NBRC 14845 / NCIMB 13405 / ORS 571</strain>
    </source>
</reference>
<gene>
    <name evidence="1" type="primary">nuoC</name>
    <name type="ordered locus">AZC_1669</name>
</gene>
<comment type="function">
    <text evidence="1">NDH-1 shuttles electrons from NADH, via FMN and iron-sulfur (Fe-S) centers, to quinones in the respiratory chain. The immediate electron acceptor for the enzyme in this species is believed to be ubiquinone. Couples the redox reaction to proton translocation (for every two electrons transferred, four hydrogen ions are translocated across the cytoplasmic membrane), and thus conserves the redox energy in a proton gradient.</text>
</comment>
<comment type="catalytic activity">
    <reaction evidence="1">
        <text>a quinone + NADH + 5 H(+)(in) = a quinol + NAD(+) + 4 H(+)(out)</text>
        <dbReference type="Rhea" id="RHEA:57888"/>
        <dbReference type="ChEBI" id="CHEBI:15378"/>
        <dbReference type="ChEBI" id="CHEBI:24646"/>
        <dbReference type="ChEBI" id="CHEBI:57540"/>
        <dbReference type="ChEBI" id="CHEBI:57945"/>
        <dbReference type="ChEBI" id="CHEBI:132124"/>
    </reaction>
</comment>
<comment type="subunit">
    <text evidence="1">NDH-1 is composed of 14 different subunits. Subunits NuoB, C, D, E, F, and G constitute the peripheral sector of the complex.</text>
</comment>
<comment type="subcellular location">
    <subcellularLocation>
        <location evidence="1">Cell inner membrane</location>
        <topology evidence="1">Peripheral membrane protein</topology>
        <orientation evidence="1">Cytoplasmic side</orientation>
    </subcellularLocation>
</comment>
<comment type="similarity">
    <text evidence="1">Belongs to the complex I 30 kDa subunit family.</text>
</comment>
<protein>
    <recommendedName>
        <fullName evidence="1">NADH-quinone oxidoreductase subunit C</fullName>
        <ecNumber evidence="1">7.1.1.-</ecNumber>
    </recommendedName>
    <alternativeName>
        <fullName evidence="1">NADH dehydrogenase I subunit C</fullName>
    </alternativeName>
    <alternativeName>
        <fullName evidence="1">NDH-1 subunit C</fullName>
    </alternativeName>
</protein>
<feature type="chain" id="PRO_0000358040" description="NADH-quinone oxidoreductase subunit C">
    <location>
        <begin position="1"/>
        <end position="211"/>
    </location>
</feature>
<keyword id="KW-0997">Cell inner membrane</keyword>
<keyword id="KW-1003">Cell membrane</keyword>
<keyword id="KW-0472">Membrane</keyword>
<keyword id="KW-0520">NAD</keyword>
<keyword id="KW-0874">Quinone</keyword>
<keyword id="KW-1185">Reference proteome</keyword>
<keyword id="KW-1278">Translocase</keyword>
<keyword id="KW-0813">Transport</keyword>
<keyword id="KW-0830">Ubiquinone</keyword>
<accession>A8I3Y9</accession>
<organism>
    <name type="scientific">Azorhizobium caulinodans (strain ATCC 43989 / DSM 5975 / JCM 20966 / LMG 6465 / NBRC 14845 / NCIMB 13405 / ORS 571)</name>
    <dbReference type="NCBI Taxonomy" id="438753"/>
    <lineage>
        <taxon>Bacteria</taxon>
        <taxon>Pseudomonadati</taxon>
        <taxon>Pseudomonadota</taxon>
        <taxon>Alphaproteobacteria</taxon>
        <taxon>Hyphomicrobiales</taxon>
        <taxon>Xanthobacteraceae</taxon>
        <taxon>Azorhizobium</taxon>
    </lineage>
</organism>
<dbReference type="EC" id="7.1.1.-" evidence="1"/>
<dbReference type="EMBL" id="AP009384">
    <property type="protein sequence ID" value="BAF87667.1"/>
    <property type="molecule type" value="Genomic_DNA"/>
</dbReference>
<dbReference type="RefSeq" id="WP_012170197.1">
    <property type="nucleotide sequence ID" value="NC_009937.1"/>
</dbReference>
<dbReference type="SMR" id="A8I3Y9"/>
<dbReference type="STRING" id="438753.AZC_1669"/>
<dbReference type="KEGG" id="azc:AZC_1669"/>
<dbReference type="eggNOG" id="COG0852">
    <property type="taxonomic scope" value="Bacteria"/>
</dbReference>
<dbReference type="HOGENOM" id="CLU_042628_2_1_5"/>
<dbReference type="Proteomes" id="UP000000270">
    <property type="component" value="Chromosome"/>
</dbReference>
<dbReference type="GO" id="GO:0005886">
    <property type="term" value="C:plasma membrane"/>
    <property type="evidence" value="ECO:0007669"/>
    <property type="project" value="UniProtKB-SubCell"/>
</dbReference>
<dbReference type="GO" id="GO:0008137">
    <property type="term" value="F:NADH dehydrogenase (ubiquinone) activity"/>
    <property type="evidence" value="ECO:0007669"/>
    <property type="project" value="InterPro"/>
</dbReference>
<dbReference type="GO" id="GO:0050136">
    <property type="term" value="F:NADH:ubiquinone reductase (non-electrogenic) activity"/>
    <property type="evidence" value="ECO:0007669"/>
    <property type="project" value="UniProtKB-UniRule"/>
</dbReference>
<dbReference type="GO" id="GO:0048038">
    <property type="term" value="F:quinone binding"/>
    <property type="evidence" value="ECO:0007669"/>
    <property type="project" value="UniProtKB-KW"/>
</dbReference>
<dbReference type="Gene3D" id="3.30.460.80">
    <property type="entry name" value="NADH:ubiquinone oxidoreductase, 30kDa subunit"/>
    <property type="match status" value="1"/>
</dbReference>
<dbReference type="HAMAP" id="MF_01357">
    <property type="entry name" value="NDH1_NuoC"/>
    <property type="match status" value="1"/>
</dbReference>
<dbReference type="InterPro" id="IPR010218">
    <property type="entry name" value="NADH_DH_suC"/>
</dbReference>
<dbReference type="InterPro" id="IPR037232">
    <property type="entry name" value="NADH_quin_OxRdtase_su_C/D-like"/>
</dbReference>
<dbReference type="InterPro" id="IPR001268">
    <property type="entry name" value="NADH_UbQ_OxRdtase_30kDa_su"/>
</dbReference>
<dbReference type="InterPro" id="IPR020396">
    <property type="entry name" value="NADH_UbQ_OxRdtase_CS"/>
</dbReference>
<dbReference type="NCBIfam" id="TIGR01961">
    <property type="entry name" value="NuoC_fam"/>
    <property type="match status" value="1"/>
</dbReference>
<dbReference type="NCBIfam" id="NF004730">
    <property type="entry name" value="PRK06074.1-1"/>
    <property type="match status" value="1"/>
</dbReference>
<dbReference type="NCBIfam" id="NF004733">
    <property type="entry name" value="PRK06074.1-5"/>
    <property type="match status" value="1"/>
</dbReference>
<dbReference type="PANTHER" id="PTHR10884:SF14">
    <property type="entry name" value="NADH DEHYDROGENASE [UBIQUINONE] IRON-SULFUR PROTEIN 3, MITOCHONDRIAL"/>
    <property type="match status" value="1"/>
</dbReference>
<dbReference type="PANTHER" id="PTHR10884">
    <property type="entry name" value="NADH DEHYDROGENASE UBIQUINONE IRON-SULFUR PROTEIN 3"/>
    <property type="match status" value="1"/>
</dbReference>
<dbReference type="Pfam" id="PF00329">
    <property type="entry name" value="Complex1_30kDa"/>
    <property type="match status" value="1"/>
</dbReference>
<dbReference type="SUPFAM" id="SSF143243">
    <property type="entry name" value="Nqo5-like"/>
    <property type="match status" value="1"/>
</dbReference>
<dbReference type="PROSITE" id="PS00542">
    <property type="entry name" value="COMPLEX1_30K"/>
    <property type="match status" value="1"/>
</dbReference>
<sequence length="211" mass="23654">MDETLKDLAAHVTGALPGAVVAHKIAYGELTLETTPDHILKLATFLRDDPSCLFTCIVDVCGADYPAREQRFEVVYHLLSLKQNARVRVKLSAGEETLVPSVTGIWPGANWFEREAYDLYGILFTGHPELRRLLTDYGFDGHPLRKDFPLTGFVEVRYDDELKRVVYEPVRLAQEFRNFDFLSPWEGVEYILPGDEKASSQPGAPAAPKAS</sequence>
<proteinExistence type="inferred from homology"/>
<evidence type="ECO:0000255" key="1">
    <source>
        <dbReference type="HAMAP-Rule" id="MF_01357"/>
    </source>
</evidence>